<comment type="catalytic activity">
    <reaction evidence="1">
        <text>2-formamido-N(1)-(5-O-phospho-beta-D-ribosyl)acetamidine + ATP = 5-amino-1-(5-phospho-beta-D-ribosyl)imidazole + ADP + phosphate + H(+)</text>
        <dbReference type="Rhea" id="RHEA:23032"/>
        <dbReference type="ChEBI" id="CHEBI:15378"/>
        <dbReference type="ChEBI" id="CHEBI:30616"/>
        <dbReference type="ChEBI" id="CHEBI:43474"/>
        <dbReference type="ChEBI" id="CHEBI:137981"/>
        <dbReference type="ChEBI" id="CHEBI:147287"/>
        <dbReference type="ChEBI" id="CHEBI:456216"/>
        <dbReference type="EC" id="6.3.3.1"/>
    </reaction>
</comment>
<comment type="pathway">
    <text evidence="1">Purine metabolism; IMP biosynthesis via de novo pathway; 5-amino-1-(5-phospho-D-ribosyl)imidazole from N(2)-formyl-N(1)-(5-phospho-D-ribosyl)glycinamide: step 2/2.</text>
</comment>
<comment type="subcellular location">
    <subcellularLocation>
        <location evidence="1">Cytoplasm</location>
    </subcellularLocation>
</comment>
<comment type="similarity">
    <text evidence="1">Belongs to the AIR synthase family.</text>
</comment>
<feature type="chain" id="PRO_0000258409" description="Phosphoribosylformylglycinamidine cyclo-ligase">
    <location>
        <begin position="1"/>
        <end position="342"/>
    </location>
</feature>
<evidence type="ECO:0000255" key="1">
    <source>
        <dbReference type="HAMAP-Rule" id="MF_00741"/>
    </source>
</evidence>
<keyword id="KW-0067">ATP-binding</keyword>
<keyword id="KW-0963">Cytoplasm</keyword>
<keyword id="KW-0436">Ligase</keyword>
<keyword id="KW-0547">Nucleotide-binding</keyword>
<keyword id="KW-0658">Purine biosynthesis</keyword>
<gene>
    <name evidence="1" type="primary">purM</name>
    <name type="ordered locus">SAB0938</name>
</gene>
<reference key="1">
    <citation type="journal article" date="2007" name="PLoS ONE">
        <title>Molecular correlates of host specialization in Staphylococcus aureus.</title>
        <authorList>
            <person name="Herron-Olson L."/>
            <person name="Fitzgerald J.R."/>
            <person name="Musser J.M."/>
            <person name="Kapur V."/>
        </authorList>
    </citation>
    <scope>NUCLEOTIDE SEQUENCE [LARGE SCALE GENOMIC DNA]</scope>
    <source>
        <strain>bovine RF122 / ET3-1</strain>
    </source>
</reference>
<protein>
    <recommendedName>
        <fullName evidence="1">Phosphoribosylformylglycinamidine cyclo-ligase</fullName>
        <ecNumber evidence="1">6.3.3.1</ecNumber>
    </recommendedName>
    <alternativeName>
        <fullName evidence="1">AIR synthase</fullName>
    </alternativeName>
    <alternativeName>
        <fullName evidence="1">AIRS</fullName>
    </alternativeName>
    <alternativeName>
        <fullName evidence="1">Phosphoribosyl-aminoimidazole synthetase</fullName>
    </alternativeName>
</protein>
<dbReference type="EC" id="6.3.3.1" evidence="1"/>
<dbReference type="EMBL" id="AJ938182">
    <property type="protein sequence ID" value="CAI80626.1"/>
    <property type="molecule type" value="Genomic_DNA"/>
</dbReference>
<dbReference type="RefSeq" id="WP_000030809.1">
    <property type="nucleotide sequence ID" value="NC_007622.1"/>
</dbReference>
<dbReference type="SMR" id="Q2YX52"/>
<dbReference type="KEGG" id="sab:SAB0938"/>
<dbReference type="HOGENOM" id="CLU_047116_0_0_9"/>
<dbReference type="UniPathway" id="UPA00074">
    <property type="reaction ID" value="UER00129"/>
</dbReference>
<dbReference type="GO" id="GO:0005829">
    <property type="term" value="C:cytosol"/>
    <property type="evidence" value="ECO:0007669"/>
    <property type="project" value="TreeGrafter"/>
</dbReference>
<dbReference type="GO" id="GO:0005524">
    <property type="term" value="F:ATP binding"/>
    <property type="evidence" value="ECO:0007669"/>
    <property type="project" value="UniProtKB-KW"/>
</dbReference>
<dbReference type="GO" id="GO:0004637">
    <property type="term" value="F:phosphoribosylamine-glycine ligase activity"/>
    <property type="evidence" value="ECO:0007669"/>
    <property type="project" value="TreeGrafter"/>
</dbReference>
<dbReference type="GO" id="GO:0004641">
    <property type="term" value="F:phosphoribosylformylglycinamidine cyclo-ligase activity"/>
    <property type="evidence" value="ECO:0007669"/>
    <property type="project" value="UniProtKB-UniRule"/>
</dbReference>
<dbReference type="GO" id="GO:0006189">
    <property type="term" value="P:'de novo' IMP biosynthetic process"/>
    <property type="evidence" value="ECO:0007669"/>
    <property type="project" value="UniProtKB-UniRule"/>
</dbReference>
<dbReference type="GO" id="GO:0046084">
    <property type="term" value="P:adenine biosynthetic process"/>
    <property type="evidence" value="ECO:0007669"/>
    <property type="project" value="TreeGrafter"/>
</dbReference>
<dbReference type="CDD" id="cd02196">
    <property type="entry name" value="PurM"/>
    <property type="match status" value="1"/>
</dbReference>
<dbReference type="FunFam" id="3.30.1330.10:FF:000001">
    <property type="entry name" value="Phosphoribosylformylglycinamidine cyclo-ligase"/>
    <property type="match status" value="1"/>
</dbReference>
<dbReference type="FunFam" id="3.90.650.10:FF:000001">
    <property type="entry name" value="Phosphoribosylformylglycinamidine cyclo-ligase"/>
    <property type="match status" value="1"/>
</dbReference>
<dbReference type="Gene3D" id="3.90.650.10">
    <property type="entry name" value="PurM-like C-terminal domain"/>
    <property type="match status" value="1"/>
</dbReference>
<dbReference type="Gene3D" id="3.30.1330.10">
    <property type="entry name" value="PurM-like, N-terminal domain"/>
    <property type="match status" value="1"/>
</dbReference>
<dbReference type="HAMAP" id="MF_00741">
    <property type="entry name" value="AIRS"/>
    <property type="match status" value="1"/>
</dbReference>
<dbReference type="InterPro" id="IPR010918">
    <property type="entry name" value="PurM-like_C_dom"/>
</dbReference>
<dbReference type="InterPro" id="IPR036676">
    <property type="entry name" value="PurM-like_C_sf"/>
</dbReference>
<dbReference type="InterPro" id="IPR016188">
    <property type="entry name" value="PurM-like_N"/>
</dbReference>
<dbReference type="InterPro" id="IPR036921">
    <property type="entry name" value="PurM-like_N_sf"/>
</dbReference>
<dbReference type="InterPro" id="IPR004733">
    <property type="entry name" value="PurM_cligase"/>
</dbReference>
<dbReference type="NCBIfam" id="TIGR00878">
    <property type="entry name" value="purM"/>
    <property type="match status" value="1"/>
</dbReference>
<dbReference type="PANTHER" id="PTHR10520:SF12">
    <property type="entry name" value="TRIFUNCTIONAL PURINE BIOSYNTHETIC PROTEIN ADENOSINE-3"/>
    <property type="match status" value="1"/>
</dbReference>
<dbReference type="PANTHER" id="PTHR10520">
    <property type="entry name" value="TRIFUNCTIONAL PURINE BIOSYNTHETIC PROTEIN ADENOSINE-3-RELATED"/>
    <property type="match status" value="1"/>
</dbReference>
<dbReference type="Pfam" id="PF00586">
    <property type="entry name" value="AIRS"/>
    <property type="match status" value="1"/>
</dbReference>
<dbReference type="Pfam" id="PF02769">
    <property type="entry name" value="AIRS_C"/>
    <property type="match status" value="1"/>
</dbReference>
<dbReference type="SUPFAM" id="SSF56042">
    <property type="entry name" value="PurM C-terminal domain-like"/>
    <property type="match status" value="1"/>
</dbReference>
<dbReference type="SUPFAM" id="SSF55326">
    <property type="entry name" value="PurM N-terminal domain-like"/>
    <property type="match status" value="1"/>
</dbReference>
<sequence length="342" mass="37075">MSKAYEQSGVNIHAGYEAVERMSSHVKRTMRKEVIGGLGGFGATFDLSQLNMTAPVLVSGTDGVGTKLKLAIDYGKHDSIGIDAVAMCVNDILTTGAEPLYFLDYIATNKVVPEVIEQIVKGISDACVETNTALIGGETAEMGEMYHEGEYDVAGFAVGAVEKDDYVDGSEVKEGQVVIGLASSGIHSNGYSLVRKLINESDIDLASNFDNRPFIDVFLEPTKLYVKPVLALKKEVSIKAMNHITGGGFYENIPRALPAGYAARIDTTSFPTPKIFDWLQQQGNIDTNEMYNIFNMGIGYTVIVDEKDVSRALKILAEQNVEAYQIGHIVKNESTAIELLGV</sequence>
<accession>Q2YX52</accession>
<name>PUR5_STAAB</name>
<proteinExistence type="inferred from homology"/>
<organism>
    <name type="scientific">Staphylococcus aureus (strain bovine RF122 / ET3-1)</name>
    <dbReference type="NCBI Taxonomy" id="273036"/>
    <lineage>
        <taxon>Bacteria</taxon>
        <taxon>Bacillati</taxon>
        <taxon>Bacillota</taxon>
        <taxon>Bacilli</taxon>
        <taxon>Bacillales</taxon>
        <taxon>Staphylococcaceae</taxon>
        <taxon>Staphylococcus</taxon>
    </lineage>
</organism>